<name>SAHH_BDEBA</name>
<protein>
    <recommendedName>
        <fullName evidence="1">Adenosylhomocysteinase</fullName>
        <ecNumber evidence="1">3.13.2.1</ecNumber>
    </recommendedName>
    <alternativeName>
        <fullName evidence="1">S-adenosyl-L-homocysteine hydrolase</fullName>
        <shortName evidence="1">AdoHcyase</shortName>
    </alternativeName>
</protein>
<comment type="function">
    <text evidence="1">May play a key role in the regulation of the intracellular concentration of adenosylhomocysteine.</text>
</comment>
<comment type="catalytic activity">
    <reaction evidence="1">
        <text>S-adenosyl-L-homocysteine + H2O = L-homocysteine + adenosine</text>
        <dbReference type="Rhea" id="RHEA:21708"/>
        <dbReference type="ChEBI" id="CHEBI:15377"/>
        <dbReference type="ChEBI" id="CHEBI:16335"/>
        <dbReference type="ChEBI" id="CHEBI:57856"/>
        <dbReference type="ChEBI" id="CHEBI:58199"/>
        <dbReference type="EC" id="3.13.2.1"/>
    </reaction>
</comment>
<comment type="cofactor">
    <cofactor evidence="1">
        <name>NAD(+)</name>
        <dbReference type="ChEBI" id="CHEBI:57540"/>
    </cofactor>
    <text evidence="1">Binds 1 NAD(+) per subunit.</text>
</comment>
<comment type="pathway">
    <text evidence="1">Amino-acid biosynthesis; L-homocysteine biosynthesis; L-homocysteine from S-adenosyl-L-homocysteine: step 1/1.</text>
</comment>
<comment type="subcellular location">
    <subcellularLocation>
        <location evidence="1">Cytoplasm</location>
    </subcellularLocation>
</comment>
<comment type="similarity">
    <text evidence="1">Belongs to the adenosylhomocysteinase family.</text>
</comment>
<comment type="sequence caution" evidence="2">
    <conflict type="erroneous initiation">
        <sequence resource="EMBL-CDS" id="CAE79232"/>
    </conflict>
</comment>
<gene>
    <name evidence="1" type="primary">ahcY</name>
    <name type="ordered locus">Bd1339</name>
</gene>
<evidence type="ECO:0000255" key="1">
    <source>
        <dbReference type="HAMAP-Rule" id="MF_00563"/>
    </source>
</evidence>
<evidence type="ECO:0000305" key="2"/>
<accession>Q6MNC0</accession>
<feature type="chain" id="PRO_0000116946" description="Adenosylhomocysteinase">
    <location>
        <begin position="1"/>
        <end position="460"/>
    </location>
</feature>
<feature type="binding site" evidence="1">
    <location>
        <position position="83"/>
    </location>
    <ligand>
        <name>substrate</name>
    </ligand>
</feature>
<feature type="binding site" evidence="1">
    <location>
        <position position="158"/>
    </location>
    <ligand>
        <name>substrate</name>
    </ligand>
</feature>
<feature type="binding site" evidence="1">
    <location>
        <position position="184"/>
    </location>
    <ligand>
        <name>substrate</name>
    </ligand>
</feature>
<feature type="binding site" evidence="1">
    <location>
        <begin position="185"/>
        <end position="187"/>
    </location>
    <ligand>
        <name>NAD(+)</name>
        <dbReference type="ChEBI" id="CHEBI:57540"/>
    </ligand>
</feature>
<feature type="binding site" evidence="1">
    <location>
        <position position="214"/>
    </location>
    <ligand>
        <name>substrate</name>
    </ligand>
</feature>
<feature type="binding site" evidence="1">
    <location>
        <position position="218"/>
    </location>
    <ligand>
        <name>substrate</name>
    </ligand>
</feature>
<feature type="binding site" evidence="1">
    <location>
        <position position="219"/>
    </location>
    <ligand>
        <name>NAD(+)</name>
        <dbReference type="ChEBI" id="CHEBI:57540"/>
    </ligand>
</feature>
<feature type="binding site" evidence="1">
    <location>
        <begin position="248"/>
        <end position="253"/>
    </location>
    <ligand>
        <name>NAD(+)</name>
        <dbReference type="ChEBI" id="CHEBI:57540"/>
    </ligand>
</feature>
<feature type="binding site" evidence="1">
    <location>
        <position position="271"/>
    </location>
    <ligand>
        <name>NAD(+)</name>
        <dbReference type="ChEBI" id="CHEBI:57540"/>
    </ligand>
</feature>
<feature type="binding site" evidence="1">
    <location>
        <begin position="327"/>
        <end position="329"/>
    </location>
    <ligand>
        <name>NAD(+)</name>
        <dbReference type="ChEBI" id="CHEBI:57540"/>
    </ligand>
</feature>
<feature type="binding site" evidence="1">
    <location>
        <position position="373"/>
    </location>
    <ligand>
        <name>NAD(+)</name>
        <dbReference type="ChEBI" id="CHEBI:57540"/>
    </ligand>
</feature>
<organism>
    <name type="scientific">Bdellovibrio bacteriovorus (strain ATCC 15356 / DSM 50701 / NCIMB 9529 / HD100)</name>
    <dbReference type="NCBI Taxonomy" id="264462"/>
    <lineage>
        <taxon>Bacteria</taxon>
        <taxon>Pseudomonadati</taxon>
        <taxon>Bdellovibrionota</taxon>
        <taxon>Bdellovibrionia</taxon>
        <taxon>Bdellovibrionales</taxon>
        <taxon>Pseudobdellovibrionaceae</taxon>
        <taxon>Bdellovibrio</taxon>
    </lineage>
</organism>
<keyword id="KW-0963">Cytoplasm</keyword>
<keyword id="KW-0378">Hydrolase</keyword>
<keyword id="KW-0520">NAD</keyword>
<keyword id="KW-0554">One-carbon metabolism</keyword>
<keyword id="KW-1185">Reference proteome</keyword>
<proteinExistence type="inferred from homology"/>
<dbReference type="EC" id="3.13.2.1" evidence="1"/>
<dbReference type="EMBL" id="BX842649">
    <property type="protein sequence ID" value="CAE79232.1"/>
    <property type="status" value="ALT_INIT"/>
    <property type="molecule type" value="Genomic_DNA"/>
</dbReference>
<dbReference type="RefSeq" id="WP_264358377.1">
    <property type="nucleotide sequence ID" value="NC_005363.1"/>
</dbReference>
<dbReference type="SMR" id="Q6MNC0"/>
<dbReference type="STRING" id="264462.Bd1339"/>
<dbReference type="GeneID" id="93012356"/>
<dbReference type="KEGG" id="bba:Bd1339"/>
<dbReference type="eggNOG" id="COG0499">
    <property type="taxonomic scope" value="Bacteria"/>
</dbReference>
<dbReference type="HOGENOM" id="CLU_025194_2_1_7"/>
<dbReference type="UniPathway" id="UPA00314">
    <property type="reaction ID" value="UER00076"/>
</dbReference>
<dbReference type="Proteomes" id="UP000008080">
    <property type="component" value="Chromosome"/>
</dbReference>
<dbReference type="GO" id="GO:0005829">
    <property type="term" value="C:cytosol"/>
    <property type="evidence" value="ECO:0007669"/>
    <property type="project" value="TreeGrafter"/>
</dbReference>
<dbReference type="GO" id="GO:0004013">
    <property type="term" value="F:adenosylhomocysteinase activity"/>
    <property type="evidence" value="ECO:0007669"/>
    <property type="project" value="UniProtKB-UniRule"/>
</dbReference>
<dbReference type="GO" id="GO:0071269">
    <property type="term" value="P:L-homocysteine biosynthetic process"/>
    <property type="evidence" value="ECO:0007669"/>
    <property type="project" value="UniProtKB-UniRule"/>
</dbReference>
<dbReference type="GO" id="GO:0006730">
    <property type="term" value="P:one-carbon metabolic process"/>
    <property type="evidence" value="ECO:0007669"/>
    <property type="project" value="UniProtKB-KW"/>
</dbReference>
<dbReference type="GO" id="GO:0033353">
    <property type="term" value="P:S-adenosylmethionine cycle"/>
    <property type="evidence" value="ECO:0007669"/>
    <property type="project" value="TreeGrafter"/>
</dbReference>
<dbReference type="CDD" id="cd00401">
    <property type="entry name" value="SAHH"/>
    <property type="match status" value="1"/>
</dbReference>
<dbReference type="FunFam" id="3.40.50.1480:FF:000006">
    <property type="entry name" value="Adenosylhomocysteinase"/>
    <property type="match status" value="1"/>
</dbReference>
<dbReference type="FunFam" id="3.40.50.720:FF:000004">
    <property type="entry name" value="Adenosylhomocysteinase"/>
    <property type="match status" value="1"/>
</dbReference>
<dbReference type="Gene3D" id="3.40.50.1480">
    <property type="entry name" value="Adenosylhomocysteinase-like"/>
    <property type="match status" value="2"/>
</dbReference>
<dbReference type="Gene3D" id="3.40.50.720">
    <property type="entry name" value="NAD(P)-binding Rossmann-like Domain"/>
    <property type="match status" value="1"/>
</dbReference>
<dbReference type="HAMAP" id="MF_00563">
    <property type="entry name" value="AdoHcyase"/>
    <property type="match status" value="1"/>
</dbReference>
<dbReference type="InterPro" id="IPR042172">
    <property type="entry name" value="Adenosylhomocyst_ase-like_sf"/>
</dbReference>
<dbReference type="InterPro" id="IPR000043">
    <property type="entry name" value="Adenosylhomocysteinase-like"/>
</dbReference>
<dbReference type="InterPro" id="IPR015878">
    <property type="entry name" value="Ado_hCys_hydrolase_NAD-bd"/>
</dbReference>
<dbReference type="InterPro" id="IPR036291">
    <property type="entry name" value="NAD(P)-bd_dom_sf"/>
</dbReference>
<dbReference type="InterPro" id="IPR020082">
    <property type="entry name" value="S-Ado-L-homoCys_hydrolase_CS"/>
</dbReference>
<dbReference type="NCBIfam" id="TIGR00936">
    <property type="entry name" value="ahcY"/>
    <property type="match status" value="1"/>
</dbReference>
<dbReference type="NCBIfam" id="NF004005">
    <property type="entry name" value="PRK05476.2-3"/>
    <property type="match status" value="1"/>
</dbReference>
<dbReference type="PANTHER" id="PTHR23420">
    <property type="entry name" value="ADENOSYLHOMOCYSTEINASE"/>
    <property type="match status" value="1"/>
</dbReference>
<dbReference type="PANTHER" id="PTHR23420:SF0">
    <property type="entry name" value="ADENOSYLHOMOCYSTEINASE"/>
    <property type="match status" value="1"/>
</dbReference>
<dbReference type="Pfam" id="PF05221">
    <property type="entry name" value="AdoHcyase"/>
    <property type="match status" value="2"/>
</dbReference>
<dbReference type="Pfam" id="PF00670">
    <property type="entry name" value="AdoHcyase_NAD"/>
    <property type="match status" value="1"/>
</dbReference>
<dbReference type="PIRSF" id="PIRSF001109">
    <property type="entry name" value="Ad_hcy_hydrolase"/>
    <property type="match status" value="1"/>
</dbReference>
<dbReference type="SMART" id="SM00996">
    <property type="entry name" value="AdoHcyase"/>
    <property type="match status" value="1"/>
</dbReference>
<dbReference type="SMART" id="SM00997">
    <property type="entry name" value="AdoHcyase_NAD"/>
    <property type="match status" value="1"/>
</dbReference>
<dbReference type="SUPFAM" id="SSF52283">
    <property type="entry name" value="Formate/glycerate dehydrogenase catalytic domain-like"/>
    <property type="match status" value="1"/>
</dbReference>
<dbReference type="SUPFAM" id="SSF51735">
    <property type="entry name" value="NAD(P)-binding Rossmann-fold domains"/>
    <property type="match status" value="1"/>
</dbReference>
<dbReference type="PROSITE" id="PS00738">
    <property type="entry name" value="ADOHCYASE_1"/>
    <property type="match status" value="1"/>
</dbReference>
<dbReference type="PROSITE" id="PS00739">
    <property type="entry name" value="ADOHCYASE_2"/>
    <property type="match status" value="1"/>
</dbReference>
<reference key="1">
    <citation type="journal article" date="2004" name="Science">
        <title>A predator unmasked: life cycle of Bdellovibrio bacteriovorus from a genomic perspective.</title>
        <authorList>
            <person name="Rendulic S."/>
            <person name="Jagtap P."/>
            <person name="Rosinus A."/>
            <person name="Eppinger M."/>
            <person name="Baar C."/>
            <person name="Lanz C."/>
            <person name="Keller H."/>
            <person name="Lambert C."/>
            <person name="Evans K.J."/>
            <person name="Goesmann A."/>
            <person name="Meyer F."/>
            <person name="Sockett R.E."/>
            <person name="Schuster S.C."/>
        </authorList>
    </citation>
    <scope>NUCLEOTIDE SEQUENCE [LARGE SCALE GENOMIC DNA]</scope>
    <source>
        <strain>ATCC 15356 / DSM 50701 / NCIMB 9529 / HD100</strain>
    </source>
</reference>
<sequence>MKKNAKMKAPTATKTAAKTPVVDYRVSKEAMENPEVFAKLAKWGREEIKIAETEMPGLMALRKEYKKQQPLKGARIAGCLHMTIQTAVLIETLVELGAEIRWSSCNIFSTQDHAAAAIAAAGIPVFAWKGLTEQEFNWCIEQTIVGWGKEGFNMILDDGGDLTNMMHEPRFAKEMKKIIGISEETTTGVHNLEVLVKQGKLKVPAININDSVTKSKFDNLYGCRESLADGIKRATDVMVAGKICVVAGYGDVGKGSAHSLRGLGARVLVTEIDPICALQAAMEGFEVTTMEDAAPLGDIFVTATGCCDIITDKHFMKMKNNAIVCNIGHFDIEIDMAWLNKNSKMREVKPQVDIHTLKNGKQVIILAKGRLVNLGCATGHPSFVMSNSFTNQVLAQMELFNNRDKYQDIAVYRLPKHLDEKVAALHLDKLGVKLTKLSSKQAKYLHMSPQGPFKPEHYRY</sequence>